<organism>
    <name type="scientific">Clostridium perfringens (strain 13 / Type A)</name>
    <dbReference type="NCBI Taxonomy" id="195102"/>
    <lineage>
        <taxon>Bacteria</taxon>
        <taxon>Bacillati</taxon>
        <taxon>Bacillota</taxon>
        <taxon>Clostridia</taxon>
        <taxon>Eubacteriales</taxon>
        <taxon>Clostridiaceae</taxon>
        <taxon>Clostridium</taxon>
    </lineage>
</organism>
<protein>
    <recommendedName>
        <fullName evidence="1">DNA-directed RNA polymerase subunit beta'</fullName>
        <shortName evidence="1">RNAP subunit beta'</shortName>
        <ecNumber evidence="1">2.7.7.6</ecNumber>
    </recommendedName>
    <alternativeName>
        <fullName evidence="1">RNA polymerase subunit beta'</fullName>
    </alternativeName>
    <alternativeName>
        <fullName evidence="1">Transcriptase subunit beta'</fullName>
    </alternativeName>
</protein>
<dbReference type="EC" id="2.7.7.6" evidence="1"/>
<dbReference type="EMBL" id="BA000016">
    <property type="protein sequence ID" value="BAB82118.1"/>
    <property type="molecule type" value="Genomic_DNA"/>
</dbReference>
<dbReference type="RefSeq" id="WP_003460614.1">
    <property type="nucleotide sequence ID" value="NC_003366.1"/>
</dbReference>
<dbReference type="SMR" id="P0C2E8"/>
<dbReference type="STRING" id="195102.gene:10491729"/>
<dbReference type="GeneID" id="93001002"/>
<dbReference type="KEGG" id="cpe:CPE2412"/>
<dbReference type="HOGENOM" id="CLU_000524_3_1_9"/>
<dbReference type="Proteomes" id="UP000000818">
    <property type="component" value="Chromosome"/>
</dbReference>
<dbReference type="GO" id="GO:0000428">
    <property type="term" value="C:DNA-directed RNA polymerase complex"/>
    <property type="evidence" value="ECO:0007669"/>
    <property type="project" value="UniProtKB-KW"/>
</dbReference>
<dbReference type="GO" id="GO:0003677">
    <property type="term" value="F:DNA binding"/>
    <property type="evidence" value="ECO:0007669"/>
    <property type="project" value="UniProtKB-UniRule"/>
</dbReference>
<dbReference type="GO" id="GO:0003899">
    <property type="term" value="F:DNA-directed RNA polymerase activity"/>
    <property type="evidence" value="ECO:0007669"/>
    <property type="project" value="UniProtKB-UniRule"/>
</dbReference>
<dbReference type="GO" id="GO:0000287">
    <property type="term" value="F:magnesium ion binding"/>
    <property type="evidence" value="ECO:0007669"/>
    <property type="project" value="UniProtKB-UniRule"/>
</dbReference>
<dbReference type="GO" id="GO:0008270">
    <property type="term" value="F:zinc ion binding"/>
    <property type="evidence" value="ECO:0007669"/>
    <property type="project" value="UniProtKB-UniRule"/>
</dbReference>
<dbReference type="GO" id="GO:0006351">
    <property type="term" value="P:DNA-templated transcription"/>
    <property type="evidence" value="ECO:0007669"/>
    <property type="project" value="UniProtKB-UniRule"/>
</dbReference>
<dbReference type="CDD" id="cd02655">
    <property type="entry name" value="RNAP_beta'_C"/>
    <property type="match status" value="1"/>
</dbReference>
<dbReference type="CDD" id="cd01609">
    <property type="entry name" value="RNAP_beta'_N"/>
    <property type="match status" value="1"/>
</dbReference>
<dbReference type="FunFam" id="1.10.150.390:FF:000002">
    <property type="entry name" value="DNA-directed RNA polymerase subunit beta"/>
    <property type="match status" value="1"/>
</dbReference>
<dbReference type="FunFam" id="1.10.40.90:FF:000001">
    <property type="entry name" value="DNA-directed RNA polymerase subunit beta"/>
    <property type="match status" value="1"/>
</dbReference>
<dbReference type="FunFam" id="4.10.860.120:FF:000001">
    <property type="entry name" value="DNA-directed RNA polymerase subunit beta"/>
    <property type="match status" value="1"/>
</dbReference>
<dbReference type="Gene3D" id="1.10.132.30">
    <property type="match status" value="1"/>
</dbReference>
<dbReference type="Gene3D" id="1.10.150.390">
    <property type="match status" value="1"/>
</dbReference>
<dbReference type="Gene3D" id="1.10.1790.20">
    <property type="match status" value="1"/>
</dbReference>
<dbReference type="Gene3D" id="1.10.40.90">
    <property type="match status" value="1"/>
</dbReference>
<dbReference type="Gene3D" id="2.40.40.20">
    <property type="match status" value="1"/>
</dbReference>
<dbReference type="Gene3D" id="2.40.50.100">
    <property type="match status" value="1"/>
</dbReference>
<dbReference type="Gene3D" id="4.10.860.120">
    <property type="entry name" value="RNA polymerase II, clamp domain"/>
    <property type="match status" value="1"/>
</dbReference>
<dbReference type="Gene3D" id="1.10.274.100">
    <property type="entry name" value="RNA polymerase Rpb1, domain 3"/>
    <property type="match status" value="1"/>
</dbReference>
<dbReference type="HAMAP" id="MF_01322">
    <property type="entry name" value="RNApol_bact_RpoC"/>
    <property type="match status" value="1"/>
</dbReference>
<dbReference type="InterPro" id="IPR045867">
    <property type="entry name" value="DNA-dir_RpoC_beta_prime"/>
</dbReference>
<dbReference type="InterPro" id="IPR012754">
    <property type="entry name" value="DNA-dir_RpoC_beta_prime_bact"/>
</dbReference>
<dbReference type="InterPro" id="IPR000722">
    <property type="entry name" value="RNA_pol_asu"/>
</dbReference>
<dbReference type="InterPro" id="IPR006592">
    <property type="entry name" value="RNA_pol_N"/>
</dbReference>
<dbReference type="InterPro" id="IPR007080">
    <property type="entry name" value="RNA_pol_Rpb1_1"/>
</dbReference>
<dbReference type="InterPro" id="IPR007066">
    <property type="entry name" value="RNA_pol_Rpb1_3"/>
</dbReference>
<dbReference type="InterPro" id="IPR042102">
    <property type="entry name" value="RNA_pol_Rpb1_3_sf"/>
</dbReference>
<dbReference type="InterPro" id="IPR007083">
    <property type="entry name" value="RNA_pol_Rpb1_4"/>
</dbReference>
<dbReference type="InterPro" id="IPR007081">
    <property type="entry name" value="RNA_pol_Rpb1_5"/>
</dbReference>
<dbReference type="InterPro" id="IPR044893">
    <property type="entry name" value="RNA_pol_Rpb1_clamp_domain"/>
</dbReference>
<dbReference type="InterPro" id="IPR038120">
    <property type="entry name" value="Rpb1_funnel_sf"/>
</dbReference>
<dbReference type="NCBIfam" id="TIGR02386">
    <property type="entry name" value="rpoC_TIGR"/>
    <property type="match status" value="1"/>
</dbReference>
<dbReference type="PANTHER" id="PTHR19376">
    <property type="entry name" value="DNA-DIRECTED RNA POLYMERASE"/>
    <property type="match status" value="1"/>
</dbReference>
<dbReference type="PANTHER" id="PTHR19376:SF54">
    <property type="entry name" value="DNA-DIRECTED RNA POLYMERASE SUBUNIT BETA"/>
    <property type="match status" value="1"/>
</dbReference>
<dbReference type="Pfam" id="PF04997">
    <property type="entry name" value="RNA_pol_Rpb1_1"/>
    <property type="match status" value="1"/>
</dbReference>
<dbReference type="Pfam" id="PF00623">
    <property type="entry name" value="RNA_pol_Rpb1_2"/>
    <property type="match status" value="2"/>
</dbReference>
<dbReference type="Pfam" id="PF04983">
    <property type="entry name" value="RNA_pol_Rpb1_3"/>
    <property type="match status" value="1"/>
</dbReference>
<dbReference type="Pfam" id="PF05000">
    <property type="entry name" value="RNA_pol_Rpb1_4"/>
    <property type="match status" value="1"/>
</dbReference>
<dbReference type="Pfam" id="PF04998">
    <property type="entry name" value="RNA_pol_Rpb1_5"/>
    <property type="match status" value="1"/>
</dbReference>
<dbReference type="SMART" id="SM00663">
    <property type="entry name" value="RPOLA_N"/>
    <property type="match status" value="1"/>
</dbReference>
<dbReference type="SUPFAM" id="SSF64484">
    <property type="entry name" value="beta and beta-prime subunits of DNA dependent RNA-polymerase"/>
    <property type="match status" value="1"/>
</dbReference>
<sequence length="1178" mass="131608">MFELNNFDALQIGLASPEQIREWSRGEVKKPETINYRTLKPERDGLFCERIFGPIKDWECHCGKYKRVRYKGIVCDRCGVEVTKSKVRRERMAHIELAAPVSHIWYFKGIPSRMGLILDMSPRALEKVLYFASYIVIDPKETSLLKKQLLNEKEYREACDKYGEESFVAGMGAEAIKTLLSEIDLERTAAELKEELKQSTGQKKVRIIRRLEVVESFKSSGNKPEWMVVDVIPVIPPDLRPMVQLDGGRFATSDLNDLYRRVINRNNRLKKLLDLGAPDIIVRNEKRMLQEAVDALIDNGRRGRPVTGPGNRPLKSLSDMLKGKQGRFRQNLLGKRVDYSGRSVIVVGPELKMYQCGLPKEMALELFKPFVMKKLVEDGVAHNIKSAKRMVERVMPQVWDVLEEVIADHPVLLNRAPTLHRLGIQAFQPVLVEGRAIKLHPLVCTAYNADFDGDQMAVHVPLSVEAQAEARFLMLAAGNIMKPSDGRPVCVPTQDMVLGSYYLTMDKDGAKGEGKYFASFDEVIMAYQLKEVDIHAKINVKVTKEIDGELKSGIIKTTPGFIIFNECIPQDLGFVNRENPEEMFNLEIDFLITKKSLGKIIDKCYLKHGPTKTSIMLDNIKATGYHYSSIGAVTVAASDMIVPQKKYELLKEADETVDKIEKMYRRGLISEDERYERVIEKWTETTEEVADTLMNSLDKFNPIFMMADSGARGSKSQIKQLAGMRGLMASPSGKIIELPIRASFREGLDVLEYFISTHGARKGNADTALKTADSGYLTRRLVDVSQDVIVREHDCGTQNGIYVEEIKEGSEVVEQLAERLTGRYTAEDVFHPETGELLAAKDTYMDPILAEKIADTGIQKVKIRSVFTCDSKVGVCTKCYGMNMATSYKINIGEAVGIVAAQSIGEPGTQLTMRTFHTGGVAGADITQGLPRVEELFEARKPKGLAIVSEVAGTVRIEETKKKRTVYVVTDSGEEYSYDIPFGSRLKVKDGIAIGAGDEITEGSVNPHDIMSIKGVDGAREYLLSEVQKVYRLQGVDINDKHLEVVVRQMTRKIKVTEQGDTNLLPGVMIDMFDFRAENERVESFGGEKAQGDIVLLGITKAALATDSFLSAASFQETTRVLTDAAIKGKIDPLVGLKENVIIGKLIPAGTGMMKYRSLKLNTENSNQETETIIEIEE</sequence>
<comment type="function">
    <text evidence="1">DNA-dependent RNA polymerase catalyzes the transcription of DNA into RNA using the four ribonucleoside triphosphates as substrates.</text>
</comment>
<comment type="catalytic activity">
    <reaction evidence="1">
        <text>RNA(n) + a ribonucleoside 5'-triphosphate = RNA(n+1) + diphosphate</text>
        <dbReference type="Rhea" id="RHEA:21248"/>
        <dbReference type="Rhea" id="RHEA-COMP:14527"/>
        <dbReference type="Rhea" id="RHEA-COMP:17342"/>
        <dbReference type="ChEBI" id="CHEBI:33019"/>
        <dbReference type="ChEBI" id="CHEBI:61557"/>
        <dbReference type="ChEBI" id="CHEBI:140395"/>
        <dbReference type="EC" id="2.7.7.6"/>
    </reaction>
</comment>
<comment type="cofactor">
    <cofactor evidence="1">
        <name>Mg(2+)</name>
        <dbReference type="ChEBI" id="CHEBI:18420"/>
    </cofactor>
    <text evidence="1">Binds 1 Mg(2+) ion per subunit.</text>
</comment>
<comment type="cofactor">
    <cofactor evidence="1">
        <name>Zn(2+)</name>
        <dbReference type="ChEBI" id="CHEBI:29105"/>
    </cofactor>
    <text evidence="1">Binds 2 Zn(2+) ions per subunit.</text>
</comment>
<comment type="subunit">
    <text evidence="1">The RNAP catalytic core consists of 2 alpha, 1 beta, 1 beta' and 1 omega subunit. When a sigma factor is associated with the core the holoenzyme is formed, which can initiate transcription.</text>
</comment>
<comment type="similarity">
    <text evidence="1">Belongs to the RNA polymerase beta' chain family.</text>
</comment>
<evidence type="ECO:0000255" key="1">
    <source>
        <dbReference type="HAMAP-Rule" id="MF_01322"/>
    </source>
</evidence>
<reference key="1">
    <citation type="journal article" date="2002" name="Proc. Natl. Acad. Sci. U.S.A.">
        <title>Complete genome sequence of Clostridium perfringens, an anaerobic flesh-eater.</title>
        <authorList>
            <person name="Shimizu T."/>
            <person name="Ohtani K."/>
            <person name="Hirakawa H."/>
            <person name="Ohshima K."/>
            <person name="Yamashita A."/>
            <person name="Shiba T."/>
            <person name="Ogasawara N."/>
            <person name="Hattori M."/>
            <person name="Kuhara S."/>
            <person name="Hayashi H."/>
        </authorList>
    </citation>
    <scope>NUCLEOTIDE SEQUENCE [LARGE SCALE GENOMIC DNA]</scope>
    <source>
        <strain>13 / Type A</strain>
    </source>
</reference>
<keyword id="KW-0240">DNA-directed RNA polymerase</keyword>
<keyword id="KW-0460">Magnesium</keyword>
<keyword id="KW-0479">Metal-binding</keyword>
<keyword id="KW-0548">Nucleotidyltransferase</keyword>
<keyword id="KW-1185">Reference proteome</keyword>
<keyword id="KW-0804">Transcription</keyword>
<keyword id="KW-0808">Transferase</keyword>
<keyword id="KW-0862">Zinc</keyword>
<name>RPOC_CLOPE</name>
<accession>P0C2E8</accession>
<accession>Q93R87</accession>
<feature type="chain" id="PRO_0000067733" description="DNA-directed RNA polymerase subunit beta'">
    <location>
        <begin position="1"/>
        <end position="1178"/>
    </location>
</feature>
<feature type="binding site" evidence="1">
    <location>
        <position position="60"/>
    </location>
    <ligand>
        <name>Zn(2+)</name>
        <dbReference type="ChEBI" id="CHEBI:29105"/>
        <label>1</label>
    </ligand>
</feature>
<feature type="binding site" evidence="1">
    <location>
        <position position="62"/>
    </location>
    <ligand>
        <name>Zn(2+)</name>
        <dbReference type="ChEBI" id="CHEBI:29105"/>
        <label>1</label>
    </ligand>
</feature>
<feature type="binding site" evidence="1">
    <location>
        <position position="75"/>
    </location>
    <ligand>
        <name>Zn(2+)</name>
        <dbReference type="ChEBI" id="CHEBI:29105"/>
        <label>1</label>
    </ligand>
</feature>
<feature type="binding site" evidence="1">
    <location>
        <position position="78"/>
    </location>
    <ligand>
        <name>Zn(2+)</name>
        <dbReference type="ChEBI" id="CHEBI:29105"/>
        <label>1</label>
    </ligand>
</feature>
<feature type="binding site" evidence="1">
    <location>
        <position position="450"/>
    </location>
    <ligand>
        <name>Mg(2+)</name>
        <dbReference type="ChEBI" id="CHEBI:18420"/>
    </ligand>
</feature>
<feature type="binding site" evidence="1">
    <location>
        <position position="452"/>
    </location>
    <ligand>
        <name>Mg(2+)</name>
        <dbReference type="ChEBI" id="CHEBI:18420"/>
    </ligand>
</feature>
<feature type="binding site" evidence="1">
    <location>
        <position position="454"/>
    </location>
    <ligand>
        <name>Mg(2+)</name>
        <dbReference type="ChEBI" id="CHEBI:18420"/>
    </ligand>
</feature>
<feature type="binding site" evidence="1">
    <location>
        <position position="795"/>
    </location>
    <ligand>
        <name>Zn(2+)</name>
        <dbReference type="ChEBI" id="CHEBI:29105"/>
        <label>2</label>
    </ligand>
</feature>
<feature type="binding site" evidence="1">
    <location>
        <position position="869"/>
    </location>
    <ligand>
        <name>Zn(2+)</name>
        <dbReference type="ChEBI" id="CHEBI:29105"/>
        <label>2</label>
    </ligand>
</feature>
<feature type="binding site" evidence="1">
    <location>
        <position position="876"/>
    </location>
    <ligand>
        <name>Zn(2+)</name>
        <dbReference type="ChEBI" id="CHEBI:29105"/>
        <label>2</label>
    </ligand>
</feature>
<feature type="binding site" evidence="1">
    <location>
        <position position="879"/>
    </location>
    <ligand>
        <name>Zn(2+)</name>
        <dbReference type="ChEBI" id="CHEBI:29105"/>
        <label>2</label>
    </ligand>
</feature>
<proteinExistence type="inferred from homology"/>
<gene>
    <name evidence="1" type="primary">rpoC</name>
    <name type="ordered locus">CPE2412</name>
</gene>